<proteinExistence type="evidence at protein level"/>
<name>GRP1_PETHY</name>
<protein>
    <recommendedName>
        <fullName>Glycine-rich cell wall structural protein 1</fullName>
    </recommendedName>
</protein>
<keyword id="KW-0134">Cell wall</keyword>
<keyword id="KW-0961">Cell wall biogenesis/degradation</keyword>
<keyword id="KW-0677">Repeat</keyword>
<keyword id="KW-0964">Secreted</keyword>
<keyword id="KW-0732">Signal</keyword>
<sequence>MGSSQKWVIGLLLFSSIFFELTAITLADDKLEESRWGNDNGCGFGRRGCGGGRFGGRGPSFGRGRGAGGGFGGGAGGGAGGGLGGGGGLGGGGGAGGGGGLGGGGGAGGGFGGGAGGGAGGGLGGGGGLGGGGGGGAGGGGGVGGGAGSGGGFGAGGGVGGGAGAGGGVGGGGGFGGGGGGGVGGGSGHGGGFGAGGGVGGGAGGGLGGGVGGGGGGGSGGGGGIGGGSGHGGGFGAGGGVGGGVGGGAAGGGGGGGGGGGGGGGGLGGGSGHGGGFGAGGGVGGGAAGGVGGGGGFGGGGGGGVGGGSGHGGGFGAGGGVGGGAGGGLGGGGGAGGGGGIGGGHGGGFGVGVGIGIGVGVGAGAGHGVGVGSGSGSGGGGNGR</sequence>
<dbReference type="EMBL" id="X04335">
    <property type="protein sequence ID" value="CAA27866.1"/>
    <property type="molecule type" value="Genomic_DNA"/>
</dbReference>
<dbReference type="PIR" id="A26099">
    <property type="entry name" value="A26099"/>
</dbReference>
<dbReference type="SMR" id="P09789"/>
<dbReference type="GO" id="GO:0005576">
    <property type="term" value="C:extracellular region"/>
    <property type="evidence" value="ECO:0007669"/>
    <property type="project" value="UniProtKB-KW"/>
</dbReference>
<dbReference type="GO" id="GO:0071555">
    <property type="term" value="P:cell wall organization"/>
    <property type="evidence" value="ECO:0007669"/>
    <property type="project" value="UniProtKB-KW"/>
</dbReference>
<comment type="function">
    <text evidence="2">Responsible for plasticity of the cell wall.</text>
</comment>
<comment type="subcellular location">
    <subcellularLocation>
        <location evidence="2">Secreted</location>
        <location evidence="2">Cell wall</location>
    </subcellularLocation>
</comment>
<comment type="developmental stage">
    <text evidence="1">Expressed during cell expansive growth and decreases during lignification (at protein level).</text>
</comment>
<comment type="miscellaneous">
    <text>This protein contains 67% glycine residues.</text>
</comment>
<comment type="miscellaneous">
    <text>90% of the mature protein residues are capable of forming a beta-pleated sheet composed of 8 anti-parallel strands.</text>
</comment>
<comment type="miscellaneous">
    <text>The glycine-rich region is comprised of two related families of repeats, F1 and F2, each repeat containing about 40 AA.</text>
</comment>
<organism>
    <name type="scientific">Petunia hybrida</name>
    <name type="common">Petunia</name>
    <dbReference type="NCBI Taxonomy" id="4102"/>
    <lineage>
        <taxon>Eukaryota</taxon>
        <taxon>Viridiplantae</taxon>
        <taxon>Streptophyta</taxon>
        <taxon>Embryophyta</taxon>
        <taxon>Tracheophyta</taxon>
        <taxon>Spermatophyta</taxon>
        <taxon>Magnoliopsida</taxon>
        <taxon>eudicotyledons</taxon>
        <taxon>Gunneridae</taxon>
        <taxon>Pentapetalae</taxon>
        <taxon>asterids</taxon>
        <taxon>lamiids</taxon>
        <taxon>Solanales</taxon>
        <taxon>Solanaceae</taxon>
        <taxon>Petunioideae</taxon>
        <taxon>Petunia</taxon>
    </lineage>
</organism>
<feature type="signal peptide">
    <location>
        <begin position="1"/>
        <end position="27"/>
    </location>
</feature>
<feature type="chain" id="PRO_0000021377" description="Glycine-rich cell wall structural protein 1">
    <location>
        <begin position="28"/>
        <end position="384"/>
    </location>
</feature>
<accession>P09789</accession>
<evidence type="ECO:0000269" key="1">
    <source>
    </source>
</evidence>
<evidence type="ECO:0000305" key="2"/>
<gene>
    <name type="primary">GRP-1</name>
</gene>
<reference key="1">
    <citation type="journal article" date="1986" name="Nature">
        <title>A gene encoding a novel glycine-rich structural protein of petunia.</title>
        <authorList>
            <person name="Condit C.M."/>
            <person name="Meagher R.B."/>
        </authorList>
    </citation>
    <scope>NUCLEOTIDE SEQUENCE [GENOMIC DNA]</scope>
</reference>
<reference key="2">
    <citation type="journal article" date="1993" name="Plant Cell">
        <title>Developmental expression and localization of petunia glycine-rich protein 1.</title>
        <authorList>
            <person name="Condit C.M."/>
        </authorList>
    </citation>
    <scope>DEVELOPMENTAL STAGE</scope>
</reference>